<proteinExistence type="evidence at transcript level"/>
<organism>
    <name type="scientific">Pongo abelii</name>
    <name type="common">Sumatran orangutan</name>
    <name type="synonym">Pongo pygmaeus abelii</name>
    <dbReference type="NCBI Taxonomy" id="9601"/>
    <lineage>
        <taxon>Eukaryota</taxon>
        <taxon>Metazoa</taxon>
        <taxon>Chordata</taxon>
        <taxon>Craniata</taxon>
        <taxon>Vertebrata</taxon>
        <taxon>Euteleostomi</taxon>
        <taxon>Mammalia</taxon>
        <taxon>Eutheria</taxon>
        <taxon>Euarchontoglires</taxon>
        <taxon>Primates</taxon>
        <taxon>Haplorrhini</taxon>
        <taxon>Catarrhini</taxon>
        <taxon>Hominidae</taxon>
        <taxon>Pongo</taxon>
    </lineage>
</organism>
<comment type="function">
    <text evidence="1">Plays a role in the regulation of diverse cellular processes such as ribosome biogenesis, chromatin remodeling or protein chaperoning. Modulates the histone chaperone function and the RNA-binding activity of nucleolar phosphoprotein B23/NPM. Efficiently mediates chromatin remodeling when included in a pentamer containing NPM3 and NPM.</text>
</comment>
<comment type="subunit">
    <text evidence="1">Interacts with NPM (via N-terminus). Forms a pentamer with NPM at a ratio 4:1 (NPM3/NPM). Two pentamers form a decamer.</text>
</comment>
<comment type="subcellular location">
    <subcellularLocation>
        <location evidence="1">Nucleus</location>
    </subcellularLocation>
    <subcellularLocation>
        <location evidence="1">Nucleus</location>
        <location evidence="1">Nucleolus</location>
    </subcellularLocation>
    <text evidence="1">Mainly found in the granular component of the nucleolus.</text>
</comment>
<comment type="PTM">
    <text evidence="3">Phosphorylated.</text>
</comment>
<comment type="similarity">
    <text evidence="3">Belongs to the nucleoplasmin family.</text>
</comment>
<sequence>MAAGTAAALAFLSQESRTRAGGVGGLRVPAPVTMDSFFFGCELSGHTRSFTFKVEEEDDAEHVLALTMLCLTEGAKDECNVVEVVARNHDHQEIAVPVANLKLSCQPMLSLDDFQLQPPVTFRLKSGSGPVRITGRHQIVTMSNDVSEEESEEEEEEEDSDEEEAELCPILPAKKQGGRP</sequence>
<dbReference type="EMBL" id="CR858444">
    <property type="protein sequence ID" value="CAH90673.1"/>
    <property type="molecule type" value="mRNA"/>
</dbReference>
<dbReference type="RefSeq" id="NP_001125366.1">
    <property type="nucleotide sequence ID" value="NM_001131894.2"/>
</dbReference>
<dbReference type="SMR" id="Q5RC37"/>
<dbReference type="FunCoup" id="Q5RC37">
    <property type="interactions" value="1644"/>
</dbReference>
<dbReference type="STRING" id="9601.ENSPPYP00000003010"/>
<dbReference type="Ensembl" id="ENSPPYT00000003114.3">
    <property type="protein sequence ID" value="ENSPPYP00000003010.3"/>
    <property type="gene ID" value="ENSPPYG00000002589.3"/>
</dbReference>
<dbReference type="GeneID" id="100172269"/>
<dbReference type="KEGG" id="pon:100172269"/>
<dbReference type="CTD" id="10360"/>
<dbReference type="eggNOG" id="ENOG502S1E6">
    <property type="taxonomic scope" value="Eukaryota"/>
</dbReference>
<dbReference type="GeneTree" id="ENSGT00940000158796"/>
<dbReference type="HOGENOM" id="CLU_058838_1_0_1"/>
<dbReference type="InParanoid" id="Q5RC37"/>
<dbReference type="OMA" id="QIVCINN"/>
<dbReference type="OrthoDB" id="9900353at2759"/>
<dbReference type="Proteomes" id="UP000001595">
    <property type="component" value="Chromosome 10"/>
</dbReference>
<dbReference type="GO" id="GO:0015629">
    <property type="term" value="C:actin cytoskeleton"/>
    <property type="evidence" value="ECO:0007669"/>
    <property type="project" value="Ensembl"/>
</dbReference>
<dbReference type="GO" id="GO:0005829">
    <property type="term" value="C:cytosol"/>
    <property type="evidence" value="ECO:0007669"/>
    <property type="project" value="Ensembl"/>
</dbReference>
<dbReference type="GO" id="GO:0005730">
    <property type="term" value="C:nucleolus"/>
    <property type="evidence" value="ECO:0007669"/>
    <property type="project" value="UniProtKB-SubCell"/>
</dbReference>
<dbReference type="GO" id="GO:0005654">
    <property type="term" value="C:nucleoplasm"/>
    <property type="evidence" value="ECO:0007669"/>
    <property type="project" value="TreeGrafter"/>
</dbReference>
<dbReference type="GO" id="GO:0003682">
    <property type="term" value="F:chromatin binding"/>
    <property type="evidence" value="ECO:0007669"/>
    <property type="project" value="TreeGrafter"/>
</dbReference>
<dbReference type="GO" id="GO:0042393">
    <property type="term" value="F:histone binding"/>
    <property type="evidence" value="ECO:0007669"/>
    <property type="project" value="TreeGrafter"/>
</dbReference>
<dbReference type="GO" id="GO:0003723">
    <property type="term" value="F:RNA binding"/>
    <property type="evidence" value="ECO:0007669"/>
    <property type="project" value="TreeGrafter"/>
</dbReference>
<dbReference type="GO" id="GO:0006338">
    <property type="term" value="P:chromatin remodeling"/>
    <property type="evidence" value="ECO:0007669"/>
    <property type="project" value="TreeGrafter"/>
</dbReference>
<dbReference type="GO" id="GO:0006364">
    <property type="term" value="P:rRNA processing"/>
    <property type="evidence" value="ECO:0007669"/>
    <property type="project" value="Ensembl"/>
</dbReference>
<dbReference type="GO" id="GO:0009303">
    <property type="term" value="P:rRNA transcription"/>
    <property type="evidence" value="ECO:0007669"/>
    <property type="project" value="Ensembl"/>
</dbReference>
<dbReference type="FunFam" id="2.60.120.340:FF:000002">
    <property type="entry name" value="Nucleophosmin/nucleoplasmin 3"/>
    <property type="match status" value="1"/>
</dbReference>
<dbReference type="Gene3D" id="2.60.120.340">
    <property type="entry name" value="Nucleoplasmin core domain"/>
    <property type="match status" value="1"/>
</dbReference>
<dbReference type="InterPro" id="IPR004301">
    <property type="entry name" value="Nucleoplasmin"/>
</dbReference>
<dbReference type="InterPro" id="IPR024057">
    <property type="entry name" value="Nucleoplasmin_core_dom"/>
</dbReference>
<dbReference type="InterPro" id="IPR036824">
    <property type="entry name" value="Nucleoplasmin_core_dom_sf"/>
</dbReference>
<dbReference type="PANTHER" id="PTHR22747">
    <property type="entry name" value="NUCLEOPLASMIN"/>
    <property type="match status" value="1"/>
</dbReference>
<dbReference type="PANTHER" id="PTHR22747:SF13">
    <property type="entry name" value="NUCLEOPLASMIN-3"/>
    <property type="match status" value="1"/>
</dbReference>
<dbReference type="Pfam" id="PF03066">
    <property type="entry name" value="Nucleoplasmin"/>
    <property type="match status" value="1"/>
</dbReference>
<dbReference type="SUPFAM" id="SSF69203">
    <property type="entry name" value="Nucleoplasmin-like core domain"/>
    <property type="match status" value="1"/>
</dbReference>
<gene>
    <name type="primary">NPM3</name>
</gene>
<accession>Q5RC37</accession>
<reference key="1">
    <citation type="submission" date="2004-11" db="EMBL/GenBank/DDBJ databases">
        <authorList>
            <consortium name="The German cDNA consortium"/>
        </authorList>
    </citation>
    <scope>NUCLEOTIDE SEQUENCE [LARGE SCALE MRNA]</scope>
    <source>
        <tissue>Heart</tissue>
    </source>
</reference>
<name>NPM3_PONAB</name>
<keyword id="KW-0007">Acetylation</keyword>
<keyword id="KW-0143">Chaperone</keyword>
<keyword id="KW-0488">Methylation</keyword>
<keyword id="KW-0539">Nucleus</keyword>
<keyword id="KW-0597">Phosphoprotein</keyword>
<keyword id="KW-1185">Reference proteome</keyword>
<protein>
    <recommendedName>
        <fullName>Nucleoplasmin-3</fullName>
    </recommendedName>
</protein>
<evidence type="ECO:0000250" key="1">
    <source>
        <dbReference type="UniProtKB" id="O75607"/>
    </source>
</evidence>
<evidence type="ECO:0000256" key="2">
    <source>
        <dbReference type="SAM" id="MobiDB-lite"/>
    </source>
</evidence>
<evidence type="ECO:0000305" key="3"/>
<feature type="initiator methionine" description="Removed" evidence="1">
    <location>
        <position position="1"/>
    </location>
</feature>
<feature type="chain" id="PRO_0000219491" description="Nucleoplasmin-3">
    <location>
        <begin position="2"/>
        <end position="180"/>
    </location>
</feature>
<feature type="region of interest" description="Disordered" evidence="2">
    <location>
        <begin position="141"/>
        <end position="180"/>
    </location>
</feature>
<feature type="compositionally biased region" description="Acidic residues" evidence="2">
    <location>
        <begin position="146"/>
        <end position="166"/>
    </location>
</feature>
<feature type="modified residue" description="N-acetylalanine" evidence="1">
    <location>
        <position position="2"/>
    </location>
</feature>
<feature type="modified residue" description="Phosphoserine" evidence="1">
    <location>
        <position position="13"/>
    </location>
</feature>
<feature type="modified residue" description="Phosphoserine" evidence="1">
    <location>
        <position position="16"/>
    </location>
</feature>
<feature type="modified residue" description="Omega-N-methylarginine" evidence="1">
    <location>
        <position position="27"/>
    </location>
</feature>
<feature type="modified residue" description="Phosphoserine" evidence="1">
    <location>
        <position position="147"/>
    </location>
</feature>
<feature type="modified residue" description="Phosphoserine" evidence="1">
    <location>
        <position position="151"/>
    </location>
</feature>
<feature type="modified residue" description="Phosphoserine" evidence="1">
    <location>
        <position position="160"/>
    </location>
</feature>